<accession>O67151</accession>
<reference key="1">
    <citation type="journal article" date="1998" name="Nature">
        <title>The complete genome of the hyperthermophilic bacterium Aquifex aeolicus.</title>
        <authorList>
            <person name="Deckert G."/>
            <person name="Warren P.V."/>
            <person name="Gaasterland T."/>
            <person name="Young W.G."/>
            <person name="Lenox A.L."/>
            <person name="Graham D.E."/>
            <person name="Overbeek R."/>
            <person name="Snead M.A."/>
            <person name="Keller M."/>
            <person name="Aujay M."/>
            <person name="Huber R."/>
            <person name="Feldman R.A."/>
            <person name="Short J.M."/>
            <person name="Olsen G.J."/>
            <person name="Swanson R.V."/>
        </authorList>
    </citation>
    <scope>NUCLEOTIDE SEQUENCE [LARGE SCALE GENOMIC DNA]</scope>
    <source>
        <strain>VF5</strain>
    </source>
</reference>
<comment type="function">
    <text evidence="1">The glycine cleavage system catalyzes the degradation of glycine. The H protein shuttles the methylamine group of glycine from the P protein to the T protein.</text>
</comment>
<comment type="cofactor">
    <cofactor evidence="1">
        <name>(R)-lipoate</name>
        <dbReference type="ChEBI" id="CHEBI:83088"/>
    </cofactor>
    <text evidence="1">Binds 1 lipoyl cofactor covalently.</text>
</comment>
<comment type="subunit">
    <text evidence="1">The glycine cleavage system is composed of four proteins: P, T, L and H.</text>
</comment>
<comment type="similarity">
    <text evidence="1">Belongs to the GcvH family.</text>
</comment>
<protein>
    <recommendedName>
        <fullName evidence="1">Glycine cleavage system H protein 1</fullName>
    </recommendedName>
</protein>
<name>GCSH1_AQUAE</name>
<dbReference type="EMBL" id="AE000657">
    <property type="protein sequence ID" value="AAC07113.1"/>
    <property type="molecule type" value="Genomic_DNA"/>
</dbReference>
<dbReference type="PIR" id="D70390">
    <property type="entry name" value="D70390"/>
</dbReference>
<dbReference type="RefSeq" id="NP_213714.1">
    <property type="nucleotide sequence ID" value="NC_000918.1"/>
</dbReference>
<dbReference type="SMR" id="O67151"/>
<dbReference type="STRING" id="224324.aq_1052"/>
<dbReference type="EnsemblBacteria" id="AAC07113">
    <property type="protein sequence ID" value="AAC07113"/>
    <property type="gene ID" value="aq_1052"/>
</dbReference>
<dbReference type="KEGG" id="aae:aq_1052"/>
<dbReference type="eggNOG" id="COG0509">
    <property type="taxonomic scope" value="Bacteria"/>
</dbReference>
<dbReference type="HOGENOM" id="CLU_097408_2_2_0"/>
<dbReference type="InParanoid" id="O67151"/>
<dbReference type="OrthoDB" id="14320at2"/>
<dbReference type="Proteomes" id="UP000000798">
    <property type="component" value="Chromosome"/>
</dbReference>
<dbReference type="GO" id="GO:0005829">
    <property type="term" value="C:cytosol"/>
    <property type="evidence" value="ECO:0000318"/>
    <property type="project" value="GO_Central"/>
</dbReference>
<dbReference type="GO" id="GO:0005960">
    <property type="term" value="C:glycine cleavage complex"/>
    <property type="evidence" value="ECO:0007669"/>
    <property type="project" value="InterPro"/>
</dbReference>
<dbReference type="GO" id="GO:0019464">
    <property type="term" value="P:glycine decarboxylation via glycine cleavage system"/>
    <property type="evidence" value="ECO:0007669"/>
    <property type="project" value="UniProtKB-UniRule"/>
</dbReference>
<dbReference type="CDD" id="cd06848">
    <property type="entry name" value="GCS_H"/>
    <property type="match status" value="1"/>
</dbReference>
<dbReference type="Gene3D" id="2.40.50.100">
    <property type="match status" value="1"/>
</dbReference>
<dbReference type="HAMAP" id="MF_00272">
    <property type="entry name" value="GcvH"/>
    <property type="match status" value="1"/>
</dbReference>
<dbReference type="InterPro" id="IPR000089">
    <property type="entry name" value="Biotin_lipoyl"/>
</dbReference>
<dbReference type="InterPro" id="IPR002930">
    <property type="entry name" value="GCV_H"/>
</dbReference>
<dbReference type="InterPro" id="IPR033753">
    <property type="entry name" value="GCV_H/Fam206"/>
</dbReference>
<dbReference type="InterPro" id="IPR011053">
    <property type="entry name" value="Single_hybrid_motif"/>
</dbReference>
<dbReference type="PANTHER" id="PTHR11715">
    <property type="entry name" value="GLYCINE CLEAVAGE SYSTEM H PROTEIN"/>
    <property type="match status" value="1"/>
</dbReference>
<dbReference type="PANTHER" id="PTHR11715:SF3">
    <property type="entry name" value="GLYCINE CLEAVAGE SYSTEM H PROTEIN-RELATED"/>
    <property type="match status" value="1"/>
</dbReference>
<dbReference type="Pfam" id="PF01597">
    <property type="entry name" value="GCV_H"/>
    <property type="match status" value="1"/>
</dbReference>
<dbReference type="SUPFAM" id="SSF51230">
    <property type="entry name" value="Single hybrid motif"/>
    <property type="match status" value="1"/>
</dbReference>
<dbReference type="PROSITE" id="PS50968">
    <property type="entry name" value="BIOTINYL_LIPOYL"/>
    <property type="match status" value="1"/>
</dbReference>
<feature type="chain" id="PRO_0000166197" description="Glycine cleavage system H protein 1">
    <location>
        <begin position="1"/>
        <end position="143"/>
    </location>
</feature>
<feature type="domain" description="Lipoyl-binding" evidence="2">
    <location>
        <begin position="26"/>
        <end position="107"/>
    </location>
</feature>
<feature type="modified residue" description="N6-lipoyllysine" evidence="1">
    <location>
        <position position="67"/>
    </location>
</feature>
<proteinExistence type="inferred from homology"/>
<organism>
    <name type="scientific">Aquifex aeolicus (strain VF5)</name>
    <dbReference type="NCBI Taxonomy" id="224324"/>
    <lineage>
        <taxon>Bacteria</taxon>
        <taxon>Pseudomonadati</taxon>
        <taxon>Aquificota</taxon>
        <taxon>Aquificia</taxon>
        <taxon>Aquificales</taxon>
        <taxon>Aquificaceae</taxon>
        <taxon>Aquifex</taxon>
    </lineage>
</organism>
<evidence type="ECO:0000255" key="1">
    <source>
        <dbReference type="HAMAP-Rule" id="MF_00272"/>
    </source>
</evidence>
<evidence type="ECO:0000255" key="2">
    <source>
        <dbReference type="PROSITE-ProRule" id="PRU01066"/>
    </source>
</evidence>
<keyword id="KW-0450">Lipoyl</keyword>
<keyword id="KW-1185">Reference proteome</keyword>
<gene>
    <name evidence="1" type="primary">gcvH1</name>
    <name type="ordered locus">aq_1052</name>
</gene>
<sequence length="143" mass="16181">MWTDRLYRVEPYRMLFQWVKDEGNGIYSVGMASILAALAYPLYSIKIKPVGTKLEYDEALAIIEAGKRVATFPTPLSGIVVDVNEEVIKNPELINKKPYSSWIAKLKATNLEEVKNLQSAKEIVKTVKDFIILEDVDCSIVEE</sequence>